<protein>
    <recommendedName>
        <fullName evidence="1">RNA polymerase-associated protein RapA</fullName>
        <ecNumber evidence="1">3.6.4.-</ecNumber>
    </recommendedName>
    <alternativeName>
        <fullName evidence="1">ATP-dependent helicase HepA</fullName>
    </alternativeName>
</protein>
<name>RAPA_VIBVU</name>
<reference key="1">
    <citation type="submission" date="2002-12" db="EMBL/GenBank/DDBJ databases">
        <title>Complete genome sequence of Vibrio vulnificus CMCP6.</title>
        <authorList>
            <person name="Rhee J.H."/>
            <person name="Kim S.Y."/>
            <person name="Chung S.S."/>
            <person name="Kim J.J."/>
            <person name="Moon Y.H."/>
            <person name="Jeong H."/>
            <person name="Choy H.E."/>
        </authorList>
    </citation>
    <scope>NUCLEOTIDE SEQUENCE [LARGE SCALE GENOMIC DNA]</scope>
    <source>
        <strain>CMCP6</strain>
    </source>
</reference>
<sequence length="969" mass="109248">MAFALGQRWISDTESDLGLGTVVALDARTVTLMFAASEENRVYASNDAPVTRVVFNVGDVVECQEGWSLKVEQVVEENGLYTYLGTREDTEETGVALREIFLSNQIRFNKPQDKMYAGQIDRMDNFVLRYRALKNQYEQHRSPMRGLCGMRAGLIPHQLYIAHEVGRRHAPRVLLADEVGLGKTIEAGMIIHQQVLLGRAERILIVVPETLQHQWLVEMMRRFNLHFSIFDEERCVEAFAESDNPFDTQQYVLCSLDFLRKSRKRFEQALEAEWDLLVVDEAHHLEWSQDKPSRGYQVVEGLAERTPGVLLLTATPEQLGRESHFARLRLLDSDRFYDYAAFVEEEAQYAPVADAITALFSGVKLADEAKNQITELLSEQDVEPLFRIIESNADEESKAIARQELIDNLMDRHGTGRVLFRNTRAAIKGFPVRNVHLLPMPIPTQYTTSMRVSGMIGGKLAPEARAMKNLYPEEIFQEFEGEESSWWQFDCRVNWLLEKLKAQRSEKVLVIASRASTALQLEQALREREGIRATVFHEGMSILERDKAAAYFAQEEGGAQVLICSEIGSEGRNFQFANQLVMFDLPFNPDLLEQRIGRLDRIGQKRDIDIHVPYLQGTAQEVLARWFNEGLNAFAETCPTGRTVYDQVSDQLIEMLASGSNEALDDVIAESAKLNQALKADLEQGRDRLLEMHSNGGEKAQQIVAEIAAKDGDTNLVSFALSLFDTIGLNQDDKGENAIVVTPSEHMMVPSYPGLPYEGATITFDRDTALSREDMHFISWEHPMIQGGIDLLMSEGVGTCAVSLLKNKALPVGTLLLELIYAVDAQAPKRSGIGRFLPRTPIRLMMDARGNDLSGQVEFESFNRQLSPVNRHLASKLVSSVQNDIHRLIEAGDQLVVENVEAIRQQAQQEMQQSLNSELERLQALKAVNPNIRDEEIEAIDAQIKELNGYISKAQFQLDSLRLIVVSHN</sequence>
<comment type="function">
    <text evidence="1">Transcription regulator that activates transcription by stimulating RNA polymerase (RNAP) recycling in case of stress conditions such as supercoiled DNA or high salt concentrations. Probably acts by releasing the RNAP, when it is trapped or immobilized on tightly supercoiled DNA. Does not activate transcription on linear DNA. Probably not involved in DNA repair.</text>
</comment>
<comment type="subunit">
    <text evidence="1">Interacts with the RNAP. Has a higher affinity for the core RNAP than for the holoenzyme. Its ATPase activity is stimulated by binding to RNAP.</text>
</comment>
<comment type="similarity">
    <text evidence="1">Belongs to the SNF2/RAD54 helicase family. RapA subfamily.</text>
</comment>
<organism>
    <name type="scientific">Vibrio vulnificus (strain CMCP6)</name>
    <dbReference type="NCBI Taxonomy" id="216895"/>
    <lineage>
        <taxon>Bacteria</taxon>
        <taxon>Pseudomonadati</taxon>
        <taxon>Pseudomonadota</taxon>
        <taxon>Gammaproteobacteria</taxon>
        <taxon>Vibrionales</taxon>
        <taxon>Vibrionaceae</taxon>
        <taxon>Vibrio</taxon>
    </lineage>
</organism>
<proteinExistence type="inferred from homology"/>
<dbReference type="EC" id="3.6.4.-" evidence="1"/>
<dbReference type="EMBL" id="AE016795">
    <property type="protein sequence ID" value="AAO09899.1"/>
    <property type="molecule type" value="Genomic_DNA"/>
</dbReference>
<dbReference type="RefSeq" id="WP_011079417.1">
    <property type="nucleotide sequence ID" value="NC_004459.3"/>
</dbReference>
<dbReference type="SMR" id="Q8DCG1"/>
<dbReference type="KEGG" id="vvu:VV1_1459"/>
<dbReference type="HOGENOM" id="CLU_011520_0_0_6"/>
<dbReference type="Proteomes" id="UP000002275">
    <property type="component" value="Chromosome 1"/>
</dbReference>
<dbReference type="GO" id="GO:0005524">
    <property type="term" value="F:ATP binding"/>
    <property type="evidence" value="ECO:0007669"/>
    <property type="project" value="UniProtKB-UniRule"/>
</dbReference>
<dbReference type="GO" id="GO:0003677">
    <property type="term" value="F:DNA binding"/>
    <property type="evidence" value="ECO:0007669"/>
    <property type="project" value="UniProtKB-KW"/>
</dbReference>
<dbReference type="GO" id="GO:0004386">
    <property type="term" value="F:helicase activity"/>
    <property type="evidence" value="ECO:0007669"/>
    <property type="project" value="UniProtKB-UniRule"/>
</dbReference>
<dbReference type="GO" id="GO:0016817">
    <property type="term" value="F:hydrolase activity, acting on acid anhydrides"/>
    <property type="evidence" value="ECO:0007669"/>
    <property type="project" value="InterPro"/>
</dbReference>
<dbReference type="GO" id="GO:0006355">
    <property type="term" value="P:regulation of DNA-templated transcription"/>
    <property type="evidence" value="ECO:0007669"/>
    <property type="project" value="UniProtKB-UniRule"/>
</dbReference>
<dbReference type="CDD" id="cd18011">
    <property type="entry name" value="DEXDc_RapA"/>
    <property type="match status" value="1"/>
</dbReference>
<dbReference type="CDD" id="cd18793">
    <property type="entry name" value="SF2_C_SNF"/>
    <property type="match status" value="1"/>
</dbReference>
<dbReference type="Gene3D" id="2.30.30.140">
    <property type="match status" value="1"/>
</dbReference>
<dbReference type="Gene3D" id="2.30.30.930">
    <property type="match status" value="1"/>
</dbReference>
<dbReference type="Gene3D" id="3.30.360.80">
    <property type="match status" value="1"/>
</dbReference>
<dbReference type="Gene3D" id="6.10.140.1500">
    <property type="match status" value="1"/>
</dbReference>
<dbReference type="Gene3D" id="6.10.140.2230">
    <property type="match status" value="1"/>
</dbReference>
<dbReference type="Gene3D" id="3.40.50.300">
    <property type="entry name" value="P-loop containing nucleotide triphosphate hydrolases"/>
    <property type="match status" value="1"/>
</dbReference>
<dbReference type="Gene3D" id="3.40.50.10810">
    <property type="entry name" value="Tandem AAA-ATPase domain"/>
    <property type="match status" value="1"/>
</dbReference>
<dbReference type="HAMAP" id="MF_01821">
    <property type="entry name" value="Helicase_RapA"/>
    <property type="match status" value="1"/>
</dbReference>
<dbReference type="InterPro" id="IPR014001">
    <property type="entry name" value="Helicase_ATP-bd"/>
</dbReference>
<dbReference type="InterPro" id="IPR001650">
    <property type="entry name" value="Helicase_C-like"/>
</dbReference>
<dbReference type="InterPro" id="IPR023949">
    <property type="entry name" value="Helicase_RapA"/>
</dbReference>
<dbReference type="InterPro" id="IPR027417">
    <property type="entry name" value="P-loop_NTPase"/>
</dbReference>
<dbReference type="InterPro" id="IPR022737">
    <property type="entry name" value="RapA_C"/>
</dbReference>
<dbReference type="InterPro" id="IPR038718">
    <property type="entry name" value="SNF2-like_sf"/>
</dbReference>
<dbReference type="InterPro" id="IPR049730">
    <property type="entry name" value="SNF2/RAD54-like_C"/>
</dbReference>
<dbReference type="InterPro" id="IPR000330">
    <property type="entry name" value="SNF2_N"/>
</dbReference>
<dbReference type="InterPro" id="IPR040765">
    <property type="entry name" value="Tudor_1_RapA"/>
</dbReference>
<dbReference type="InterPro" id="IPR040766">
    <property type="entry name" value="Tudor_2_RapA"/>
</dbReference>
<dbReference type="NCBIfam" id="NF003426">
    <property type="entry name" value="PRK04914.1"/>
    <property type="match status" value="1"/>
</dbReference>
<dbReference type="PANTHER" id="PTHR45766">
    <property type="entry name" value="DNA ANNEALING HELICASE AND ENDONUCLEASE ZRANB3 FAMILY MEMBER"/>
    <property type="match status" value="1"/>
</dbReference>
<dbReference type="PANTHER" id="PTHR45766:SF6">
    <property type="entry name" value="SWI_SNF-RELATED MATRIX-ASSOCIATED ACTIN-DEPENDENT REGULATOR OF CHROMATIN SUBFAMILY A-LIKE PROTEIN 1"/>
    <property type="match status" value="1"/>
</dbReference>
<dbReference type="Pfam" id="PF00271">
    <property type="entry name" value="Helicase_C"/>
    <property type="match status" value="1"/>
</dbReference>
<dbReference type="Pfam" id="PF12137">
    <property type="entry name" value="RapA_C"/>
    <property type="match status" value="1"/>
</dbReference>
<dbReference type="Pfam" id="PF00176">
    <property type="entry name" value="SNF2-rel_dom"/>
    <property type="match status" value="1"/>
</dbReference>
<dbReference type="Pfam" id="PF18339">
    <property type="entry name" value="Tudor_1_RapA"/>
    <property type="match status" value="1"/>
</dbReference>
<dbReference type="Pfam" id="PF18337">
    <property type="entry name" value="Tudor_RapA"/>
    <property type="match status" value="1"/>
</dbReference>
<dbReference type="SMART" id="SM00487">
    <property type="entry name" value="DEXDc"/>
    <property type="match status" value="1"/>
</dbReference>
<dbReference type="SMART" id="SM00490">
    <property type="entry name" value="HELICc"/>
    <property type="match status" value="1"/>
</dbReference>
<dbReference type="SUPFAM" id="SSF52540">
    <property type="entry name" value="P-loop containing nucleoside triphosphate hydrolases"/>
    <property type="match status" value="2"/>
</dbReference>
<dbReference type="PROSITE" id="PS51192">
    <property type="entry name" value="HELICASE_ATP_BIND_1"/>
    <property type="match status" value="1"/>
</dbReference>
<dbReference type="PROSITE" id="PS51194">
    <property type="entry name" value="HELICASE_CTER"/>
    <property type="match status" value="1"/>
</dbReference>
<evidence type="ECO:0000255" key="1">
    <source>
        <dbReference type="HAMAP-Rule" id="MF_01821"/>
    </source>
</evidence>
<gene>
    <name evidence="1" type="primary">rapA</name>
    <name type="synonym">hepA</name>
    <name type="ordered locus">VV1_1459</name>
</gene>
<keyword id="KW-0010">Activator</keyword>
<keyword id="KW-0067">ATP-binding</keyword>
<keyword id="KW-0238">DNA-binding</keyword>
<keyword id="KW-0347">Helicase</keyword>
<keyword id="KW-0378">Hydrolase</keyword>
<keyword id="KW-0547">Nucleotide-binding</keyword>
<keyword id="KW-0804">Transcription</keyword>
<keyword id="KW-0805">Transcription regulation</keyword>
<accession>Q8DCG1</accession>
<feature type="chain" id="PRO_0000207190" description="RNA polymerase-associated protein RapA">
    <location>
        <begin position="1"/>
        <end position="969"/>
    </location>
</feature>
<feature type="domain" description="Helicase ATP-binding" evidence="1">
    <location>
        <begin position="164"/>
        <end position="334"/>
    </location>
</feature>
<feature type="domain" description="Helicase C-terminal" evidence="1">
    <location>
        <begin position="492"/>
        <end position="668"/>
    </location>
</feature>
<feature type="short sequence motif" description="DEAH box">
    <location>
        <begin position="280"/>
        <end position="283"/>
    </location>
</feature>
<feature type="binding site" evidence="1">
    <location>
        <begin position="177"/>
        <end position="184"/>
    </location>
    <ligand>
        <name>ATP</name>
        <dbReference type="ChEBI" id="CHEBI:30616"/>
    </ligand>
</feature>